<protein>
    <recommendedName>
        <fullName evidence="1">Anti-CBASS protein 2</fullName>
        <shortName evidence="1">Acb2</shortName>
    </recommendedName>
    <alternativeName>
        <fullName evidence="3">Protein Vs.4</fullName>
    </alternativeName>
</protein>
<organism>
    <name type="scientific">Enterobacteria phage T4</name>
    <name type="common">Bacteriophage T4</name>
    <dbReference type="NCBI Taxonomy" id="10665"/>
    <lineage>
        <taxon>Viruses</taxon>
        <taxon>Duplodnaviria</taxon>
        <taxon>Heunggongvirae</taxon>
        <taxon>Uroviricota</taxon>
        <taxon>Caudoviricetes</taxon>
        <taxon>Straboviridae</taxon>
        <taxon>Tevenvirinae</taxon>
        <taxon>Tequatrovirus</taxon>
    </lineage>
</organism>
<organismHost>
    <name type="scientific">Escherichia coli</name>
    <dbReference type="NCBI Taxonomy" id="562"/>
</organismHost>
<gene>
    <name evidence="1" type="primary">acb2</name>
    <name type="synonym">62.5</name>
    <name type="synonym">vs.4</name>
    <name type="synonym">y06G</name>
</gene>
<accession>P13314</accession>
<sequence>MIEDIKGYKPHTEEKIGKVNAIKDAEVRLGLIFDALYDEFWEALDNCEDCEFAKNYAESLDQLTIAKTKLKEASMWACRAVFQPEEKY</sequence>
<comment type="function">
    <text evidence="2 5">Antagonizes CBASS (cyclic oligonucleotide-based antiphage signaling system) (Probable) (PubMed:36848932). Binds and sequesters host-produced 3',3'-cyclic GMP-AMP (cGAMP) with a dissociation constant of about 30 nM; each homohexamer binds 3 cGAMP molecules with 1 cGAMP molecule binding to 2 monomers (PubMed:36848932). Sequestration of cGAMP inhibits the cGAMP-activated phospholipase activity of host CBASS effector protein CapV (PubMed:36848932).</text>
</comment>
<comment type="subunit">
    <text evidence="2">Homohexamer when bound to 3',3'-cGAMP.</text>
</comment>
<comment type="disruption phenotype">
    <text evidence="2">Decreases the titer of this phage in E.coli about 50-fold (PubMed:36848932).</text>
</comment>
<comment type="similarity">
    <text evidence="4">Belongs to the Acb2 family.</text>
</comment>
<proteinExistence type="evidence at protein level"/>
<evidence type="ECO:0000250" key="1">
    <source>
        <dbReference type="UniProtKB" id="A0A1C8HPQ3"/>
    </source>
</evidence>
<evidence type="ECO:0000269" key="2">
    <source>
    </source>
</evidence>
<evidence type="ECO:0000303" key="3">
    <source>
    </source>
</evidence>
<evidence type="ECO:0000305" key="4"/>
<evidence type="ECO:0000305" key="5">
    <source>
    </source>
</evidence>
<evidence type="ECO:0007744" key="6">
    <source>
        <dbReference type="PDB" id="7UQ2"/>
    </source>
</evidence>
<evidence type="ECO:0007829" key="7">
    <source>
        <dbReference type="PDB" id="7UQ2"/>
    </source>
</evidence>
<reference key="1">
    <citation type="journal article" date="1986" name="Nucleic Acids Res.">
        <title>Nucleotide sequence and analysis of the 58.3 to 65.5-kb early region of bacteriophage T4.</title>
        <authorList>
            <person name="Valerie K."/>
            <person name="Stevens J."/>
            <person name="Lynch M."/>
            <person name="Henderson E.E."/>
            <person name="de Riel J.K."/>
        </authorList>
    </citation>
    <scope>NUCLEOTIDE SEQUENCE [GENOMIC DNA]</scope>
</reference>
<reference key="2">
    <citation type="journal article" date="2003" name="Microbiol. Mol. Biol. Rev.">
        <title>Bacteriophage T4 genome.</title>
        <authorList>
            <person name="Miller E.S."/>
            <person name="Kutter E."/>
            <person name="Mosig G."/>
            <person name="Arisaka F."/>
            <person name="Kunisawa T."/>
            <person name="Ruger W."/>
        </authorList>
    </citation>
    <scope>NUCLEOTIDE SEQUENCE [LARGE SCALE GENOMIC DNA]</scope>
</reference>
<reference evidence="6" key="3">
    <citation type="journal article" date="2023" name="Nature">
        <title>Ubiquitin-like conjugation by bacterial cGAS enhances anti-phage defence.</title>
        <authorList>
            <person name="Jenson J.M."/>
            <person name="Li T."/>
            <person name="Du F."/>
            <person name="Ea C.K."/>
            <person name="Chen Z.J."/>
        </authorList>
    </citation>
    <scope>X-RAY CRYSTALLOGRAPHY (2.00 ANGSTROMS) IN COMPLEX WITH 3'3'-CGAMP</scope>
    <scope>FUNCTION</scope>
    <scope>SUBUNIT</scope>
    <scope>DISRUPTION PHENOTYPE</scope>
    <scope>MUTAGENESIS OF TYR-8; THR-12; LEU-29; PHE-33; LEU-60; ALA-66; ALA-73; SER-74; ALA-77 AND PHE-82</scope>
</reference>
<name>ACB2_BPT4</name>
<keyword id="KW-0002">3D-structure</keyword>
<keyword id="KW-0547">Nucleotide-binding</keyword>
<keyword id="KW-1185">Reference proteome</keyword>
<feature type="chain" id="PRO_0000165139" description="Anti-CBASS protein 2">
    <location>
        <begin position="1"/>
        <end position="88"/>
    </location>
</feature>
<feature type="binding site" evidence="2 6">
    <location>
        <position position="8"/>
    </location>
    <ligand>
        <name>3',3'-cGAMP</name>
        <dbReference type="ChEBI" id="CHEBI:71501"/>
    </ligand>
</feature>
<feature type="binding site" evidence="6">
    <location>
        <position position="9"/>
    </location>
    <ligand>
        <name>3',3'-cGAMP</name>
        <dbReference type="ChEBI" id="CHEBI:71501"/>
    </ligand>
</feature>
<feature type="binding site" evidence="2 6">
    <location>
        <position position="11"/>
    </location>
    <ligand>
        <name>3',3'-cGAMP</name>
        <dbReference type="ChEBI" id="CHEBI:71501"/>
    </ligand>
</feature>
<feature type="binding site" evidence="2 6">
    <location>
        <position position="23"/>
    </location>
    <ligand>
        <name>3',3'-cGAMP</name>
        <dbReference type="ChEBI" id="CHEBI:71501"/>
    </ligand>
</feature>
<feature type="binding site" evidence="2">
    <location>
        <position position="79"/>
    </location>
    <ligand>
        <name>3',3'-cGAMP</name>
        <dbReference type="ChEBI" id="CHEBI:71501"/>
    </ligand>
</feature>
<feature type="binding site" evidence="2 6">
    <location>
        <position position="82"/>
    </location>
    <ligand>
        <name>3',3'-cGAMP</name>
        <dbReference type="ChEBI" id="CHEBI:71501"/>
    </ligand>
</feature>
<feature type="mutagenesis site" description="No longer inhibits host CapV phospholipase, 5-fold decrease in cGAMP-binding." evidence="2">
    <original>Y</original>
    <variation>A</variation>
    <location>
        <position position="8"/>
    </location>
</feature>
<feature type="mutagenesis site" description="Partially inhibits host CapV phospholipase." evidence="2">
    <original>T</original>
    <variation>I</variation>
    <location>
        <position position="12"/>
    </location>
</feature>
<feature type="mutagenesis site" description="No longer inhibits host CapV phospholipase, no longer binds cGAMP, does not hexamerize." evidence="2">
    <original>L</original>
    <variation>D</variation>
    <location>
        <position position="29"/>
    </location>
</feature>
<feature type="mutagenesis site" description="Still inhibits host CapV phospholipase, binds cGAMP, about 50% hexamerization." evidence="2">
    <original>F</original>
    <variation>A</variation>
    <location>
        <position position="33"/>
    </location>
</feature>
<feature type="mutagenesis site" description="Still inhibits host CapV phospholipase." evidence="2">
    <original>L</original>
    <variation>F</variation>
    <location>
        <position position="60"/>
    </location>
</feature>
<feature type="mutagenesis site" description="No longer inhibits host CapV phospholipase, no longer binds cGAMP, does not hexamerize." evidence="2">
    <original>A</original>
    <variation>D</variation>
    <location>
        <position position="66"/>
    </location>
</feature>
<feature type="mutagenesis site" description="No longer inhibits host CapV phospholipase, no longer binds cGAMP, does not hexamerize." evidence="2">
    <original>A</original>
    <variation>D</variation>
    <location>
        <position position="73"/>
    </location>
</feature>
<feature type="mutagenesis site" description="Partially inhibits host CapV phospholipase." evidence="2">
    <original>S</original>
    <variation>N</variation>
    <location>
        <position position="74"/>
    </location>
</feature>
<feature type="mutagenesis site" description="No longer inhibits host CapV phospholipase, no longer binds cGAMP, does not hexamerize." evidence="2">
    <original>A</original>
    <variation>Y</variation>
    <location>
        <position position="77"/>
    </location>
</feature>
<feature type="mutagenesis site" description="No longer inhibits host CapV phospholipase, 25-fold decrease in cGAMP-binding." evidence="2">
    <original>F</original>
    <variation>A</variation>
    <location>
        <position position="82"/>
    </location>
</feature>
<feature type="helix" evidence="7">
    <location>
        <begin position="2"/>
        <end position="4"/>
    </location>
</feature>
<feature type="helix" evidence="7">
    <location>
        <begin position="13"/>
        <end position="47"/>
    </location>
</feature>
<feature type="helix" evidence="7">
    <location>
        <begin position="53"/>
        <end position="82"/>
    </location>
</feature>
<dbReference type="EMBL" id="X04567">
    <property type="protein sequence ID" value="CAA28225.1"/>
    <property type="molecule type" value="Genomic_DNA"/>
</dbReference>
<dbReference type="EMBL" id="AF158101">
    <property type="protein sequence ID" value="AAD42674.1"/>
    <property type="molecule type" value="Genomic_DNA"/>
</dbReference>
<dbReference type="RefSeq" id="NP_049728.1">
    <property type="nucleotide sequence ID" value="NC_000866.4"/>
</dbReference>
<dbReference type="PDB" id="7UQ2">
    <property type="method" value="X-ray"/>
    <property type="resolution" value="2.00 A"/>
    <property type="chains" value="A/B/C/D/E/F=1-88"/>
</dbReference>
<dbReference type="PDBsum" id="7UQ2"/>
<dbReference type="SMR" id="P13314"/>
<dbReference type="GeneID" id="1258619"/>
<dbReference type="KEGG" id="vg:1258619"/>
<dbReference type="OrthoDB" id="19118at10239"/>
<dbReference type="Proteomes" id="UP000009087">
    <property type="component" value="Segment"/>
</dbReference>
<dbReference type="GO" id="GO:0000166">
    <property type="term" value="F:nucleotide binding"/>
    <property type="evidence" value="ECO:0007669"/>
    <property type="project" value="UniProtKB-KW"/>
</dbReference>
<dbReference type="InterPro" id="IPR056098">
    <property type="entry name" value="Acb2/Tad1_hairpin"/>
</dbReference>
<dbReference type="Pfam" id="PF24729">
    <property type="entry name" value="Acb2_Tad1_hairpin"/>
    <property type="match status" value="1"/>
</dbReference>